<organism>
    <name type="scientific">Scheffersomyces stipitis (strain ATCC 58785 / CBS 6054 / NBRC 10063 / NRRL Y-11545)</name>
    <name type="common">Yeast</name>
    <name type="synonym">Pichia stipitis</name>
    <dbReference type="NCBI Taxonomy" id="322104"/>
    <lineage>
        <taxon>Eukaryota</taxon>
        <taxon>Fungi</taxon>
        <taxon>Dikarya</taxon>
        <taxon>Ascomycota</taxon>
        <taxon>Saccharomycotina</taxon>
        <taxon>Pichiomycetes</taxon>
        <taxon>Debaryomycetaceae</taxon>
        <taxon>Scheffersomyces</taxon>
    </lineage>
</organism>
<protein>
    <recommendedName>
        <fullName>ASTRA-associated protein 1</fullName>
    </recommendedName>
</protein>
<feature type="chain" id="PRO_0000402219" description="ASTRA-associated protein 1">
    <location>
        <begin position="1"/>
        <end position="432"/>
    </location>
</feature>
<feature type="repeat" description="WD 1">
    <location>
        <begin position="14"/>
        <end position="55"/>
    </location>
</feature>
<feature type="repeat" description="WD 2">
    <location>
        <begin position="58"/>
        <end position="96"/>
    </location>
</feature>
<feature type="repeat" description="WD 3">
    <location>
        <begin position="100"/>
        <end position="144"/>
    </location>
</feature>
<feature type="repeat" description="WD 4">
    <location>
        <begin position="258"/>
        <end position="296"/>
    </location>
</feature>
<feature type="repeat" description="WD 5">
    <location>
        <begin position="395"/>
        <end position="432"/>
    </location>
</feature>
<name>ASA1_PICST</name>
<comment type="function">
    <text evidence="1">Component of the ASTRA complex involved in chromatin remodeling.</text>
</comment>
<comment type="subunit">
    <text evidence="1">Component of the ASTRA chromatin remodeling machinery complex.</text>
</comment>
<comment type="subcellular location">
    <subcellularLocation>
        <location evidence="1">Nucleus</location>
    </subcellularLocation>
</comment>
<comment type="similarity">
    <text evidence="2">Belongs to the WD repeat ASA1 family.</text>
</comment>
<proteinExistence type="inferred from homology"/>
<keyword id="KW-0156">Chromatin regulator</keyword>
<keyword id="KW-0539">Nucleus</keyword>
<keyword id="KW-1185">Reference proteome</keyword>
<keyword id="KW-0677">Repeat</keyword>
<keyword id="KW-0853">WD repeat</keyword>
<accession>A3LXM4</accession>
<reference key="1">
    <citation type="journal article" date="2007" name="Nat. Biotechnol.">
        <title>Genome sequence of the lignocellulose-bioconverting and xylose-fermenting yeast Pichia stipitis.</title>
        <authorList>
            <person name="Jeffries T.W."/>
            <person name="Grigoriev I.V."/>
            <person name="Grimwood J."/>
            <person name="Laplaza J.M."/>
            <person name="Aerts A."/>
            <person name="Salamov A."/>
            <person name="Schmutz J."/>
            <person name="Lindquist E."/>
            <person name="Dehal P."/>
            <person name="Shapiro H."/>
            <person name="Jin Y.-S."/>
            <person name="Passoth V."/>
            <person name="Richardson P.M."/>
        </authorList>
    </citation>
    <scope>NUCLEOTIDE SEQUENCE [LARGE SCALE GENOMIC DNA]</scope>
    <source>
        <strain>ATCC 58785 / CBS 6054 / NBRC 10063 / NRRL Y-11545</strain>
    </source>
</reference>
<dbReference type="EMBL" id="CP000500">
    <property type="protein sequence ID" value="ABN67826.2"/>
    <property type="molecule type" value="Genomic_DNA"/>
</dbReference>
<dbReference type="RefSeq" id="XP_001385855.2">
    <property type="nucleotide sequence ID" value="XM_001385818.1"/>
</dbReference>
<dbReference type="FunCoup" id="A3LXM4">
    <property type="interactions" value="56"/>
</dbReference>
<dbReference type="STRING" id="322104.A3LXM4"/>
<dbReference type="GeneID" id="4840372"/>
<dbReference type="KEGG" id="pic:PICST_32865"/>
<dbReference type="eggNOG" id="KOG0322">
    <property type="taxonomic scope" value="Eukaryota"/>
</dbReference>
<dbReference type="HOGENOM" id="CLU_045414_0_0_1"/>
<dbReference type="InParanoid" id="A3LXM4"/>
<dbReference type="OMA" id="LVCCNTQ"/>
<dbReference type="OrthoDB" id="7668193at2759"/>
<dbReference type="Proteomes" id="UP000002258">
    <property type="component" value="Chromosome 6"/>
</dbReference>
<dbReference type="GO" id="GO:0005634">
    <property type="term" value="C:nucleus"/>
    <property type="evidence" value="ECO:0007669"/>
    <property type="project" value="UniProtKB-SubCell"/>
</dbReference>
<dbReference type="GO" id="GO:0006325">
    <property type="term" value="P:chromatin organization"/>
    <property type="evidence" value="ECO:0007669"/>
    <property type="project" value="UniProtKB-KW"/>
</dbReference>
<dbReference type="Gene3D" id="2.130.10.10">
    <property type="entry name" value="YVTN repeat-like/Quinoprotein amine dehydrogenase"/>
    <property type="match status" value="1"/>
</dbReference>
<dbReference type="InterPro" id="IPR015943">
    <property type="entry name" value="WD40/YVTN_repeat-like_dom_sf"/>
</dbReference>
<dbReference type="InterPro" id="IPR036322">
    <property type="entry name" value="WD40_repeat_dom_sf"/>
</dbReference>
<dbReference type="InterPro" id="IPR001680">
    <property type="entry name" value="WD40_rpt"/>
</dbReference>
<dbReference type="Pfam" id="PF00400">
    <property type="entry name" value="WD40"/>
    <property type="match status" value="1"/>
</dbReference>
<dbReference type="SMART" id="SM00320">
    <property type="entry name" value="WD40"/>
    <property type="match status" value="4"/>
</dbReference>
<dbReference type="SUPFAM" id="SSF50978">
    <property type="entry name" value="WD40 repeat-like"/>
    <property type="match status" value="1"/>
</dbReference>
<dbReference type="PROSITE" id="PS50082">
    <property type="entry name" value="WD_REPEATS_2"/>
    <property type="match status" value="1"/>
</dbReference>
<dbReference type="PROSITE" id="PS50294">
    <property type="entry name" value="WD_REPEATS_REGION"/>
    <property type="match status" value="1"/>
</dbReference>
<evidence type="ECO:0000250" key="1"/>
<evidence type="ECO:0000305" key="2"/>
<gene>
    <name type="primary">ASA1</name>
    <name type="synonym">CAF4</name>
    <name type="ORF">PICST_32865</name>
</gene>
<sequence length="432" mass="48724">MDNTTPQQIFSLRSHENSISNIEEVFLWNKHCLISSDTKGWIIIWNINAKRPIRKWQAHDETILTLTLISTNTLLTHGRDASLKIWDISVEHAESSPPELFFLPINTLNFCNVQYFNDFLITPASVDSNNFDIYKITNPEYEFKRVLANFSPFDLYSKNKTEINSPNEQGRNDFGIIMKLVYVEHSNQLFLGFESGQIIGLNINLNPDATLVDKTTEAYSKKTPSKYGGLSSLIDKTSSRTLINKEPRVNLIYSDSSHIPNPITSLVHLKDNILISGSTNKQVIVHHYQMHSIDSSDAHLDVKKVAHSGIQSIVADEKTDTIFIGHWNGVIEGVDYKSNKKKLDSQFELKRDLPHLITTSTNSSGGDTNTIAKEAVKLTSLALSIERENTQVTTTKKKSYKDLVKARSAYIGNDNRLLFAGYEDGAVVAYRL</sequence>